<organism>
    <name type="scientific">Gallus gallus</name>
    <name type="common">Chicken</name>
    <dbReference type="NCBI Taxonomy" id="9031"/>
    <lineage>
        <taxon>Eukaryota</taxon>
        <taxon>Metazoa</taxon>
        <taxon>Chordata</taxon>
        <taxon>Craniata</taxon>
        <taxon>Vertebrata</taxon>
        <taxon>Euteleostomi</taxon>
        <taxon>Archelosauria</taxon>
        <taxon>Archosauria</taxon>
        <taxon>Dinosauria</taxon>
        <taxon>Saurischia</taxon>
        <taxon>Theropoda</taxon>
        <taxon>Coelurosauria</taxon>
        <taxon>Aves</taxon>
        <taxon>Neognathae</taxon>
        <taxon>Galloanserae</taxon>
        <taxon>Galliformes</taxon>
        <taxon>Phasianidae</taxon>
        <taxon>Phasianinae</taxon>
        <taxon>Gallus</taxon>
    </lineage>
</organism>
<gene>
    <name evidence="2" type="primary">NSG1</name>
</gene>
<evidence type="ECO:0000250" key="1">
    <source>
        <dbReference type="UniProtKB" id="P02683"/>
    </source>
</evidence>
<evidence type="ECO:0000250" key="2">
    <source>
        <dbReference type="UniProtKB" id="P42857"/>
    </source>
</evidence>
<evidence type="ECO:0000250" key="3">
    <source>
        <dbReference type="UniProtKB" id="Q62092"/>
    </source>
</evidence>
<evidence type="ECO:0000255" key="4"/>
<evidence type="ECO:0000305" key="5"/>
<sequence length="185" mass="21075">MVKLGNNFSEKSTKQPLLEDGFDTIPLITPLDVNQLQFPPPDKVVVKTKTEYEPDRKKGKFRTPKIAEFTISITEGVSERFKVTVLVLFALAFLTCVVFLVVYKVYKYDHTCPEGFVFKNNQCIPAGLENYYSEQDSNARGKFYTVINHYNLAKQTITRSVSPWMTVLSEEKLSEQETEAAEKSA</sequence>
<dbReference type="EMBL" id="AF498103">
    <property type="protein sequence ID" value="AAM18711.1"/>
    <property type="molecule type" value="mRNA"/>
</dbReference>
<dbReference type="RefSeq" id="NP_989896.1">
    <property type="nucleotide sequence ID" value="NM_204565.2"/>
</dbReference>
<dbReference type="SMR" id="Q8QFP1"/>
<dbReference type="FunCoup" id="Q8QFP1">
    <property type="interactions" value="294"/>
</dbReference>
<dbReference type="STRING" id="9031.ENSGALP00000024159"/>
<dbReference type="PaxDb" id="9031-ENSGALP00000024159"/>
<dbReference type="Ensembl" id="ENSGALT00010021977.1">
    <property type="protein sequence ID" value="ENSGALP00010012589.1"/>
    <property type="gene ID" value="ENSGALG00010009216.1"/>
</dbReference>
<dbReference type="GeneID" id="395251"/>
<dbReference type="KEGG" id="gga:395251"/>
<dbReference type="CTD" id="27065"/>
<dbReference type="VEuPathDB" id="HostDB:geneid_395251"/>
<dbReference type="eggNOG" id="ENOG502QSAI">
    <property type="taxonomic scope" value="Eukaryota"/>
</dbReference>
<dbReference type="GeneTree" id="ENSGT00390000000483"/>
<dbReference type="HOGENOM" id="CLU_112085_1_0_1"/>
<dbReference type="InParanoid" id="Q8QFP1"/>
<dbReference type="OMA" id="MQGRCMP"/>
<dbReference type="OrthoDB" id="8924576at2759"/>
<dbReference type="PhylomeDB" id="Q8QFP1"/>
<dbReference type="TreeFam" id="TF332232"/>
<dbReference type="PRO" id="PR:Q8QFP1"/>
<dbReference type="Proteomes" id="UP000000539">
    <property type="component" value="Chromosome 4"/>
</dbReference>
<dbReference type="Bgee" id="ENSGALG00000015010">
    <property type="expression patterns" value="Expressed in brain and 9 other cell types or tissues"/>
</dbReference>
<dbReference type="GO" id="GO:0030425">
    <property type="term" value="C:dendrite"/>
    <property type="evidence" value="ECO:0007669"/>
    <property type="project" value="UniProtKB-SubCell"/>
</dbReference>
<dbReference type="GO" id="GO:0031901">
    <property type="term" value="C:early endosome membrane"/>
    <property type="evidence" value="ECO:0007669"/>
    <property type="project" value="UniProtKB-SubCell"/>
</dbReference>
<dbReference type="GO" id="GO:0005783">
    <property type="term" value="C:endoplasmic reticulum"/>
    <property type="evidence" value="ECO:0007669"/>
    <property type="project" value="Ensembl"/>
</dbReference>
<dbReference type="GO" id="GO:0005768">
    <property type="term" value="C:endosome"/>
    <property type="evidence" value="ECO:0000318"/>
    <property type="project" value="GO_Central"/>
</dbReference>
<dbReference type="GO" id="GO:0098978">
    <property type="term" value="C:glutamatergic synapse"/>
    <property type="evidence" value="ECO:0007669"/>
    <property type="project" value="Ensembl"/>
</dbReference>
<dbReference type="GO" id="GO:0032580">
    <property type="term" value="C:Golgi cisterna membrane"/>
    <property type="evidence" value="ECO:0007669"/>
    <property type="project" value="UniProtKB-SubCell"/>
</dbReference>
<dbReference type="GO" id="GO:0016328">
    <property type="term" value="C:lateral plasma membrane"/>
    <property type="evidence" value="ECO:0007669"/>
    <property type="project" value="Ensembl"/>
</dbReference>
<dbReference type="GO" id="GO:0043202">
    <property type="term" value="C:lysosomal lumen"/>
    <property type="evidence" value="ECO:0007669"/>
    <property type="project" value="UniProtKB-SubCell"/>
</dbReference>
<dbReference type="GO" id="GO:0016020">
    <property type="term" value="C:membrane"/>
    <property type="evidence" value="ECO:0000318"/>
    <property type="project" value="GO_Central"/>
</dbReference>
<dbReference type="GO" id="GO:0032585">
    <property type="term" value="C:multivesicular body membrane"/>
    <property type="evidence" value="ECO:0007669"/>
    <property type="project" value="UniProtKB-SubCell"/>
</dbReference>
<dbReference type="GO" id="GO:0045211">
    <property type="term" value="C:postsynaptic membrane"/>
    <property type="evidence" value="ECO:0007669"/>
    <property type="project" value="Ensembl"/>
</dbReference>
<dbReference type="GO" id="GO:0055038">
    <property type="term" value="C:recycling endosome membrane"/>
    <property type="evidence" value="ECO:0007669"/>
    <property type="project" value="UniProtKB-SubCell"/>
</dbReference>
<dbReference type="GO" id="GO:0032051">
    <property type="term" value="F:clathrin light chain binding"/>
    <property type="evidence" value="ECO:0000318"/>
    <property type="project" value="GO_Central"/>
</dbReference>
<dbReference type="GO" id="GO:0042982">
    <property type="term" value="P:amyloid precursor protein metabolic process"/>
    <property type="evidence" value="ECO:0007669"/>
    <property type="project" value="Ensembl"/>
</dbReference>
<dbReference type="GO" id="GO:0006915">
    <property type="term" value="P:apoptotic process"/>
    <property type="evidence" value="ECO:0007669"/>
    <property type="project" value="Ensembl"/>
</dbReference>
<dbReference type="GO" id="GO:0048268">
    <property type="term" value="P:clathrin coat assembly"/>
    <property type="evidence" value="ECO:0000318"/>
    <property type="project" value="GO_Central"/>
</dbReference>
<dbReference type="GO" id="GO:0016197">
    <property type="term" value="P:endosomal transport"/>
    <property type="evidence" value="ECO:0000318"/>
    <property type="project" value="GO_Central"/>
</dbReference>
<dbReference type="GO" id="GO:0099627">
    <property type="term" value="P:neurotransmitter receptor cycle"/>
    <property type="evidence" value="ECO:0007669"/>
    <property type="project" value="Ensembl"/>
</dbReference>
<dbReference type="GO" id="GO:0098887">
    <property type="term" value="P:neurotransmitter receptor transport, endosome to postsynaptic membrane"/>
    <property type="evidence" value="ECO:0007669"/>
    <property type="project" value="Ensembl"/>
</dbReference>
<dbReference type="GO" id="GO:0001881">
    <property type="term" value="P:receptor recycling"/>
    <property type="evidence" value="ECO:0007669"/>
    <property type="project" value="Ensembl"/>
</dbReference>
<dbReference type="GO" id="GO:0099003">
    <property type="term" value="P:vesicle-mediated transport in synapse"/>
    <property type="evidence" value="ECO:0007669"/>
    <property type="project" value="Ensembl"/>
</dbReference>
<dbReference type="InterPro" id="IPR009431">
    <property type="entry name" value="NSG"/>
</dbReference>
<dbReference type="PANTHER" id="PTHR28546:SF3">
    <property type="entry name" value="NEURONAL VESICLE TRAFFICKING-ASSOCIATED PROTEIN 1"/>
    <property type="match status" value="1"/>
</dbReference>
<dbReference type="PANTHER" id="PTHR28546">
    <property type="entry name" value="NEURONAL VESICLE TRAFFICKING-ASSOCIATED PROTEIN 2-RELATED"/>
    <property type="match status" value="1"/>
</dbReference>
<dbReference type="Pfam" id="PF06387">
    <property type="entry name" value="Calcyon"/>
    <property type="match status" value="1"/>
</dbReference>
<dbReference type="PIRSF" id="PIRSF002383">
    <property type="entry name" value="Calcyon"/>
    <property type="match status" value="1"/>
</dbReference>
<proteinExistence type="evidence at transcript level"/>
<comment type="function">
    <text evidence="3">Plays a role in the recycling mechanism in neurons of multiple receptors and acts at the level of early endosomes to promote sorting of receptors toward a recycling pathway.</text>
</comment>
<comment type="subcellular location">
    <subcellularLocation>
        <location evidence="1">Membrane</location>
        <topology evidence="1">Single-pass type II membrane protein</topology>
    </subcellularLocation>
    <subcellularLocation>
        <location evidence="1">Golgi apparatus</location>
        <location evidence="1">trans-Golgi network membrane</location>
    </subcellularLocation>
    <subcellularLocation>
        <location evidence="1">Endosome membrane</location>
    </subcellularLocation>
    <subcellularLocation>
        <location evidence="1">Cell projection</location>
        <location evidence="1">Dendrite</location>
    </subcellularLocation>
    <subcellularLocation>
        <location evidence="1">Early endosome membrane</location>
    </subcellularLocation>
    <subcellularLocation>
        <location evidence="1">Late endosome membrane</location>
    </subcellularLocation>
    <subcellularLocation>
        <location evidence="1">Lysosome lumen</location>
    </subcellularLocation>
    <subcellularLocation>
        <location evidence="1">Recycling endosome membrane</location>
    </subcellularLocation>
    <subcellularLocation>
        <location evidence="1">Cytoplasmic vesicle membrane</location>
    </subcellularLocation>
    <subcellularLocation>
        <location evidence="1">Golgi apparatus</location>
        <location evidence="1">Golgi stack membrane</location>
    </subcellularLocation>
    <subcellularLocation>
        <location evidence="1">Endosome</location>
        <location evidence="1">Multivesicular body membrane</location>
    </subcellularLocation>
    <text evidence="1 3">Endocytosed from the cell surface, thus enters into early endosomes, trafficks to late endosomes and degradates in lysosomes (By similarity). Found in both stationary and motile endosomes. A previous study supports a type I membrane protein topology (By similarity).</text>
</comment>
<comment type="similarity">
    <text evidence="5">Belongs to the NSG family.</text>
</comment>
<keyword id="KW-0966">Cell projection</keyword>
<keyword id="KW-0968">Cytoplasmic vesicle</keyword>
<keyword id="KW-0967">Endosome</keyword>
<keyword id="KW-0333">Golgi apparatus</keyword>
<keyword id="KW-0458">Lysosome</keyword>
<keyword id="KW-0472">Membrane</keyword>
<keyword id="KW-1185">Reference proteome</keyword>
<keyword id="KW-0735">Signal-anchor</keyword>
<keyword id="KW-0812">Transmembrane</keyword>
<keyword id="KW-1133">Transmembrane helix</keyword>
<accession>Q8QFP1</accession>
<name>NSG1_CHICK</name>
<reference key="1">
    <citation type="submission" date="2002-04" db="EMBL/GenBank/DDBJ databases">
        <title>Cloning of embryo brain development-related gene.</title>
        <authorList>
            <person name="Li Y."/>
            <person name="Zhu H."/>
            <person name="Zhao R."/>
            <person name="Dao J."/>
        </authorList>
    </citation>
    <scope>NUCLEOTIDE SEQUENCE [MRNA]</scope>
    <source>
        <strain>White leghorn</strain>
        <tissue>Midbrain</tissue>
    </source>
</reference>
<feature type="chain" id="PRO_0000253602" description="Neuronal vesicle trafficking-associated protein 1">
    <location>
        <begin position="1"/>
        <end position="185"/>
    </location>
</feature>
<feature type="topological domain" description="Cytoplasmic" evidence="1">
    <location>
        <begin position="1"/>
        <end position="82"/>
    </location>
</feature>
<feature type="transmembrane region" description="Helical; Signal-anchor for type II membrane protein" evidence="4">
    <location>
        <begin position="83"/>
        <end position="103"/>
    </location>
</feature>
<feature type="topological domain" description="Lumenal" evidence="1">
    <location>
        <begin position="104"/>
        <end position="185"/>
    </location>
</feature>
<protein>
    <recommendedName>
        <fullName evidence="2">Neuronal vesicle trafficking-associated protein 1</fullName>
    </recommendedName>
    <alternativeName>
        <fullName evidence="2">Neuron-specific protein family member 1</fullName>
    </alternativeName>
    <alternativeName>
        <fullName>Protein LZ1</fullName>
    </alternativeName>
</protein>